<name>RL11_MOUSE</name>
<protein>
    <recommendedName>
        <fullName evidence="5">Large ribosomal subunit protein uL5</fullName>
    </recommendedName>
    <alternativeName>
        <fullName>60S ribosomal protein L11</fullName>
    </alternativeName>
</protein>
<comment type="function">
    <text evidence="2 3 4">Component of the ribosome, a large ribonucleoprotein complex responsible for the synthesis of proteins in the cell (PubMed:36517592). The small ribosomal subunit (SSU) binds messenger RNAs (mRNAs) and translates the encoded message by selecting cognate aminoacyl-transfer RNA (tRNA) molecules (PubMed:36517592). The large subunit (LSU) contains the ribosomal catalytic site termed the peptidyl transferase center (PTC), which catalyzes the formation of peptide bonds, thereby polymerizing the amino acids delivered by tRNAs into a polypeptide chain (PubMed:36517592). The nascent polypeptides leave the ribosome through a tunnel in the LSU and interact with protein factors that function in enzymatic processing, targeting, and the membrane insertion of nascent chains at the exit of the ribosomal tunnel (PubMed:36517592). As part of the 5S RNP/5S ribonucleoprotein particle it is an essential component of the LSU, required for its formation and the maturation of rRNAs (PubMed:36517592). It also couples ribosome biogenesis to p53/TP53 activation (PubMed:21804542). As part of the 5S RNP it accumulates in the nucleoplasm and inhibits MDM2, when ribosome biogenesis is perturbed, mediating the stabilization and the activation of TP53 (PubMed:21804542). Promotes nucleolar location of PML (PubMed:15195100).</text>
</comment>
<comment type="subunit">
    <text evidence="1 2 3 4">Component of the large ribosomal subunit (LSU) (PubMed:36517592). Part of the 5S RNP complex, which is a LSU subcomplex composed of the 5S RNA, RPL5 and RPL11 (By similarity). Component of a hexameric 5S RNP precursor complex, composed of 5S RNA, RRS1, RPF2/BXDC1, RPL5, RPL11 and HEATR3; this complex acts as a precursor for ribosome assembly (By similarity). Interacts with PML (PubMed:15195100). Interacts with MDM2 (via its RanBP2-type zinc finger domain); negatively regulates MDM2-mediated TP53 ubiquitination and degradation (PubMed:15195100, PubMed:21804542). Interacts with NOP53; retains RPL11 into the nucleolus (PubMed:21804542).</text>
</comment>
<comment type="interaction">
    <interactant intactId="EBI-1548890">
        <id>Q9CXW4</id>
    </interactant>
    <interactant intactId="EBI-641788">
        <id>P23804</id>
        <label>Mdm2</label>
    </interactant>
    <organismsDiffer>false</organismsDiffer>
    <experiments>4</experiments>
</comment>
<comment type="subcellular location">
    <subcellularLocation>
        <location evidence="2 3">Nucleus</location>
        <location evidence="2 3">Nucleolus</location>
    </subcellularLocation>
    <subcellularLocation>
        <location evidence="3 4">Cytoplasm</location>
    </subcellularLocation>
</comment>
<comment type="similarity">
    <text evidence="5">Belongs to the universal ribosomal protein uL5 family.</text>
</comment>
<keyword id="KW-0002">3D-structure</keyword>
<keyword id="KW-0007">Acetylation</keyword>
<keyword id="KW-0963">Cytoplasm</keyword>
<keyword id="KW-1017">Isopeptide bond</keyword>
<keyword id="KW-0539">Nucleus</keyword>
<keyword id="KW-0597">Phosphoprotein</keyword>
<keyword id="KW-1185">Reference proteome</keyword>
<keyword id="KW-0687">Ribonucleoprotein</keyword>
<keyword id="KW-0689">Ribosomal protein</keyword>
<keyword id="KW-0694">RNA-binding</keyword>
<keyword id="KW-0699">rRNA-binding</keyword>
<keyword id="KW-0832">Ubl conjugation</keyword>
<accession>Q9CXW4</accession>
<accession>Q3TPE3</accession>
<accession>Q6ZWY0</accession>
<dbReference type="EMBL" id="AK002998">
    <property type="protein sequence ID" value="BAB22504.1"/>
    <property type="molecule type" value="mRNA"/>
</dbReference>
<dbReference type="EMBL" id="AK008422">
    <property type="protein sequence ID" value="BAB25660.1"/>
    <property type="molecule type" value="mRNA"/>
</dbReference>
<dbReference type="EMBL" id="AK011211">
    <property type="protein sequence ID" value="BAB27470.1"/>
    <property type="molecule type" value="mRNA"/>
</dbReference>
<dbReference type="EMBL" id="AK011800">
    <property type="protein sequence ID" value="BAB27850.1"/>
    <property type="molecule type" value="mRNA"/>
</dbReference>
<dbReference type="EMBL" id="AK013923">
    <property type="protein sequence ID" value="BAB29059.1"/>
    <property type="molecule type" value="mRNA"/>
</dbReference>
<dbReference type="EMBL" id="AK088967">
    <property type="protein sequence ID" value="BAC40676.1"/>
    <property type="molecule type" value="mRNA"/>
</dbReference>
<dbReference type="EMBL" id="AK153486">
    <property type="protein sequence ID" value="BAE32034.1"/>
    <property type="molecule type" value="mRNA"/>
</dbReference>
<dbReference type="EMBL" id="AK164445">
    <property type="protein sequence ID" value="BAE37793.1"/>
    <property type="molecule type" value="mRNA"/>
</dbReference>
<dbReference type="EMBL" id="AK169053">
    <property type="protein sequence ID" value="BAE40841.1"/>
    <property type="molecule type" value="mRNA"/>
</dbReference>
<dbReference type="EMBL" id="BC025077">
    <property type="protein sequence ID" value="AAH25077.1"/>
    <property type="molecule type" value="mRNA"/>
</dbReference>
<dbReference type="EMBL" id="BC069896">
    <property type="protein sequence ID" value="AAH69896.1"/>
    <property type="molecule type" value="mRNA"/>
</dbReference>
<dbReference type="CCDS" id="CCDS18799.1"/>
<dbReference type="RefSeq" id="NP_080195.1">
    <property type="nucleotide sequence ID" value="NM_025919.3"/>
</dbReference>
<dbReference type="PDB" id="6SWA">
    <property type="method" value="EM"/>
    <property type="resolution" value="3.10 A"/>
    <property type="chains" value="J=1-178"/>
</dbReference>
<dbReference type="PDB" id="7CPU">
    <property type="method" value="EM"/>
    <property type="resolution" value="2.82 A"/>
    <property type="chains" value="LJ=1-178"/>
</dbReference>
<dbReference type="PDB" id="7CPV">
    <property type="method" value="EM"/>
    <property type="resolution" value="3.03 A"/>
    <property type="chains" value="LJ=1-178"/>
</dbReference>
<dbReference type="PDB" id="7LS1">
    <property type="method" value="EM"/>
    <property type="resolution" value="3.30 A"/>
    <property type="chains" value="E1=1-178"/>
</dbReference>
<dbReference type="PDB" id="7LS2">
    <property type="method" value="EM"/>
    <property type="resolution" value="3.10 A"/>
    <property type="chains" value="E1=1-178"/>
</dbReference>
<dbReference type="PDBsum" id="6SWA"/>
<dbReference type="PDBsum" id="7CPU"/>
<dbReference type="PDBsum" id="7CPV"/>
<dbReference type="PDBsum" id="7LS1"/>
<dbReference type="PDBsum" id="7LS2"/>
<dbReference type="EMDB" id="EMD-10321"/>
<dbReference type="EMDB" id="EMD-23500"/>
<dbReference type="EMDB" id="EMD-23501"/>
<dbReference type="EMDB" id="EMD-30432"/>
<dbReference type="EMDB" id="EMD-30433"/>
<dbReference type="SMR" id="Q9CXW4"/>
<dbReference type="BioGRID" id="211883">
    <property type="interactions" value="101"/>
</dbReference>
<dbReference type="ComplexPortal" id="CPX-5262">
    <property type="entry name" value="60S cytosolic large ribosomal subunit"/>
</dbReference>
<dbReference type="ComplexPortal" id="CPX-7662">
    <property type="entry name" value="60S cytosolic large ribosomal subunit, testis-specific variant"/>
</dbReference>
<dbReference type="ComplexPortal" id="CPX-7663">
    <property type="entry name" value="60S cytosolic large ribosomal subunit, striated muscle variant"/>
</dbReference>
<dbReference type="CORUM" id="Q9CXW4"/>
<dbReference type="FunCoup" id="Q9CXW4">
    <property type="interactions" value="1805"/>
</dbReference>
<dbReference type="IntAct" id="Q9CXW4">
    <property type="interactions" value="3"/>
</dbReference>
<dbReference type="MINT" id="Q9CXW4"/>
<dbReference type="STRING" id="10090.ENSMUSP00000099595"/>
<dbReference type="MoonProt" id="Q9CXW4"/>
<dbReference type="GlyGen" id="Q9CXW4">
    <property type="glycosylation" value="1 site, 1 O-linked glycan (1 site)"/>
</dbReference>
<dbReference type="iPTMnet" id="Q9CXW4"/>
<dbReference type="PhosphoSitePlus" id="Q9CXW4"/>
<dbReference type="SwissPalm" id="Q9CXW4"/>
<dbReference type="jPOST" id="Q9CXW4"/>
<dbReference type="PaxDb" id="10090-ENSMUSP00000099595"/>
<dbReference type="PeptideAtlas" id="Q9CXW4"/>
<dbReference type="ProteomicsDB" id="253326"/>
<dbReference type="Pumba" id="Q9CXW4"/>
<dbReference type="Antibodypedia" id="1241">
    <property type="antibodies" value="327 antibodies from 32 providers"/>
</dbReference>
<dbReference type="DNASU" id="67025"/>
<dbReference type="Ensembl" id="ENSMUST00000102536.11">
    <property type="protein sequence ID" value="ENSMUSP00000099595.5"/>
    <property type="gene ID" value="ENSMUSG00000059291.16"/>
</dbReference>
<dbReference type="GeneID" id="67025"/>
<dbReference type="KEGG" id="mmu:67025"/>
<dbReference type="UCSC" id="uc008vhr.1">
    <property type="organism name" value="mouse"/>
</dbReference>
<dbReference type="AGR" id="MGI:1914275"/>
<dbReference type="CTD" id="6135"/>
<dbReference type="MGI" id="MGI:1914275">
    <property type="gene designation" value="Rpl11"/>
</dbReference>
<dbReference type="VEuPathDB" id="HostDB:ENSMUSG00000059291"/>
<dbReference type="eggNOG" id="KOG0397">
    <property type="taxonomic scope" value="Eukaryota"/>
</dbReference>
<dbReference type="GeneTree" id="ENSGT00910000144211"/>
<dbReference type="InParanoid" id="Q9CXW4"/>
<dbReference type="OMA" id="NPMKELK"/>
<dbReference type="PhylomeDB" id="Q9CXW4"/>
<dbReference type="TreeFam" id="TF300017"/>
<dbReference type="Reactome" id="R-MMU-156827">
    <property type="pathway name" value="L13a-mediated translational silencing of Ceruloplasmin expression"/>
</dbReference>
<dbReference type="Reactome" id="R-MMU-1799339">
    <property type="pathway name" value="SRP-dependent cotranslational protein targeting to membrane"/>
</dbReference>
<dbReference type="Reactome" id="R-MMU-6791226">
    <property type="pathway name" value="Major pathway of rRNA processing in the nucleolus and cytosol"/>
</dbReference>
<dbReference type="Reactome" id="R-MMU-72689">
    <property type="pathway name" value="Formation of a pool of free 40S subunits"/>
</dbReference>
<dbReference type="Reactome" id="R-MMU-72706">
    <property type="pathway name" value="GTP hydrolysis and joining of the 60S ribosomal subunit"/>
</dbReference>
<dbReference type="Reactome" id="R-MMU-975956">
    <property type="pathway name" value="Nonsense Mediated Decay (NMD) independent of the Exon Junction Complex (EJC)"/>
</dbReference>
<dbReference type="Reactome" id="R-MMU-975957">
    <property type="pathway name" value="Nonsense Mediated Decay (NMD) enhanced by the Exon Junction Complex (EJC)"/>
</dbReference>
<dbReference type="BioGRID-ORCS" id="67025">
    <property type="hits" value="23 hits in 74 CRISPR screens"/>
</dbReference>
<dbReference type="CD-CODE" id="CE726F99">
    <property type="entry name" value="Postsynaptic density"/>
</dbReference>
<dbReference type="CD-CODE" id="DE1E139C">
    <property type="entry name" value="Chromatoid body"/>
</dbReference>
<dbReference type="ChiTaRS" id="Rpl11">
    <property type="organism name" value="mouse"/>
</dbReference>
<dbReference type="PRO" id="PR:Q9CXW4"/>
<dbReference type="Proteomes" id="UP000000589">
    <property type="component" value="Chromosome 4"/>
</dbReference>
<dbReference type="RNAct" id="Q9CXW4">
    <property type="molecule type" value="protein"/>
</dbReference>
<dbReference type="Bgee" id="ENSMUSG00000059291">
    <property type="expression patterns" value="Expressed in yolk sac and 145 other cell types or tissues"/>
</dbReference>
<dbReference type="ExpressionAtlas" id="Q9CXW4">
    <property type="expression patterns" value="baseline and differential"/>
</dbReference>
<dbReference type="GO" id="GO:0005737">
    <property type="term" value="C:cytoplasm"/>
    <property type="evidence" value="ECO:0000314"/>
    <property type="project" value="UniProtKB"/>
</dbReference>
<dbReference type="GO" id="GO:0005829">
    <property type="term" value="C:cytosol"/>
    <property type="evidence" value="ECO:0000304"/>
    <property type="project" value="Reactome"/>
</dbReference>
<dbReference type="GO" id="GO:0022625">
    <property type="term" value="C:cytosolic large ribosomal subunit"/>
    <property type="evidence" value="ECO:0000314"/>
    <property type="project" value="UniProtKB"/>
</dbReference>
<dbReference type="GO" id="GO:0005730">
    <property type="term" value="C:nucleolus"/>
    <property type="evidence" value="ECO:0000314"/>
    <property type="project" value="UniProtKB"/>
</dbReference>
<dbReference type="GO" id="GO:0005654">
    <property type="term" value="C:nucleoplasm"/>
    <property type="evidence" value="ECO:0000250"/>
    <property type="project" value="UniProtKB"/>
</dbReference>
<dbReference type="GO" id="GO:0008097">
    <property type="term" value="F:5S rRNA binding"/>
    <property type="evidence" value="ECO:0007669"/>
    <property type="project" value="Ensembl"/>
</dbReference>
<dbReference type="GO" id="GO:0003735">
    <property type="term" value="F:structural constituent of ribosome"/>
    <property type="evidence" value="ECO:0000314"/>
    <property type="project" value="UniProtKB"/>
</dbReference>
<dbReference type="GO" id="GO:1990948">
    <property type="term" value="F:ubiquitin ligase inhibitor activity"/>
    <property type="evidence" value="ECO:0007669"/>
    <property type="project" value="Ensembl"/>
</dbReference>
<dbReference type="GO" id="GO:0031625">
    <property type="term" value="F:ubiquitin protein ligase binding"/>
    <property type="evidence" value="ECO:0007669"/>
    <property type="project" value="Ensembl"/>
</dbReference>
<dbReference type="GO" id="GO:0002181">
    <property type="term" value="P:cytoplasmic translation"/>
    <property type="evidence" value="ECO:0000303"/>
    <property type="project" value="ComplexPortal"/>
</dbReference>
<dbReference type="GO" id="GO:0032435">
    <property type="term" value="P:negative regulation of proteasomal ubiquitin-dependent protein catabolic process"/>
    <property type="evidence" value="ECO:0000315"/>
    <property type="project" value="UniProtKB"/>
</dbReference>
<dbReference type="GO" id="GO:2000435">
    <property type="term" value="P:negative regulation of protein neddylation"/>
    <property type="evidence" value="ECO:0007669"/>
    <property type="project" value="Ensembl"/>
</dbReference>
<dbReference type="GO" id="GO:0010628">
    <property type="term" value="P:positive regulation of gene expression"/>
    <property type="evidence" value="ECO:0007669"/>
    <property type="project" value="Ensembl"/>
</dbReference>
<dbReference type="GO" id="GO:1901798">
    <property type="term" value="P:positive regulation of signal transduction by p53 class mediator"/>
    <property type="evidence" value="ECO:0000315"/>
    <property type="project" value="UniProtKB"/>
</dbReference>
<dbReference type="GO" id="GO:0034504">
    <property type="term" value="P:protein localization to nucleus"/>
    <property type="evidence" value="ECO:0000315"/>
    <property type="project" value="UniProtKB"/>
</dbReference>
<dbReference type="GO" id="GO:0050821">
    <property type="term" value="P:protein stabilization"/>
    <property type="evidence" value="ECO:0007669"/>
    <property type="project" value="Ensembl"/>
</dbReference>
<dbReference type="GO" id="GO:0006605">
    <property type="term" value="P:protein targeting"/>
    <property type="evidence" value="ECO:0007669"/>
    <property type="project" value="Ensembl"/>
</dbReference>
<dbReference type="GO" id="GO:0000027">
    <property type="term" value="P:ribosomal large subunit assembly"/>
    <property type="evidence" value="ECO:0007669"/>
    <property type="project" value="Ensembl"/>
</dbReference>
<dbReference type="GO" id="GO:0006364">
    <property type="term" value="P:rRNA processing"/>
    <property type="evidence" value="ECO:0007669"/>
    <property type="project" value="Ensembl"/>
</dbReference>
<dbReference type="FunFam" id="3.30.1440.10:FF:000002">
    <property type="entry name" value="60S ribosomal protein L11"/>
    <property type="match status" value="1"/>
</dbReference>
<dbReference type="Gene3D" id="3.30.1440.10">
    <property type="match status" value="1"/>
</dbReference>
<dbReference type="InterPro" id="IPR002132">
    <property type="entry name" value="Ribosomal_uL5"/>
</dbReference>
<dbReference type="InterPro" id="IPR031309">
    <property type="entry name" value="Ribosomal_uL5_C"/>
</dbReference>
<dbReference type="InterPro" id="IPR020929">
    <property type="entry name" value="Ribosomal_uL5_CS"/>
</dbReference>
<dbReference type="InterPro" id="IPR022803">
    <property type="entry name" value="Ribosomal_uL5_dom_sf"/>
</dbReference>
<dbReference type="InterPro" id="IPR031310">
    <property type="entry name" value="Ribosomal_uL5_N"/>
</dbReference>
<dbReference type="NCBIfam" id="NF003258">
    <property type="entry name" value="PRK04219.1"/>
    <property type="match status" value="1"/>
</dbReference>
<dbReference type="PANTHER" id="PTHR11994">
    <property type="entry name" value="60S RIBOSOMAL PROTEIN L11-RELATED"/>
    <property type="match status" value="1"/>
</dbReference>
<dbReference type="Pfam" id="PF00281">
    <property type="entry name" value="Ribosomal_L5"/>
    <property type="match status" value="1"/>
</dbReference>
<dbReference type="Pfam" id="PF00673">
    <property type="entry name" value="Ribosomal_L5_C"/>
    <property type="match status" value="1"/>
</dbReference>
<dbReference type="PIRSF" id="PIRSF002161">
    <property type="entry name" value="Ribosomal_L5"/>
    <property type="match status" value="1"/>
</dbReference>
<dbReference type="SUPFAM" id="SSF55282">
    <property type="entry name" value="RL5-like"/>
    <property type="match status" value="1"/>
</dbReference>
<dbReference type="PROSITE" id="PS00358">
    <property type="entry name" value="RIBOSOMAL_L5"/>
    <property type="match status" value="1"/>
</dbReference>
<proteinExistence type="evidence at protein level"/>
<feature type="initiator methionine" description="Removed" evidence="1">
    <location>
        <position position="1"/>
    </location>
</feature>
<feature type="chain" id="PRO_0000125083" description="Large ribosomal subunit protein uL5">
    <location>
        <begin position="2"/>
        <end position="178"/>
    </location>
</feature>
<feature type="modified residue" description="N-acetylalanine" evidence="1">
    <location>
        <position position="2"/>
    </location>
</feature>
<feature type="modified residue" description="Phosphothreonine" evidence="1">
    <location>
        <position position="44"/>
    </location>
</feature>
<feature type="modified residue" description="Phosphothreonine" evidence="1">
    <location>
        <position position="47"/>
    </location>
</feature>
<feature type="modified residue" description="N6-acetyllysine; alternate" evidence="1">
    <location>
        <position position="52"/>
    </location>
</feature>
<feature type="modified residue" description="N6-acetyllysine" evidence="1">
    <location>
        <position position="85"/>
    </location>
</feature>
<feature type="cross-link" description="Glycyl lysine isopeptide (Lys-Gly) (interchain with G-Cter in SUMO2)" evidence="1">
    <location>
        <position position="38"/>
    </location>
</feature>
<feature type="cross-link" description="Glycyl lysine isopeptide (Lys-Gly) (interchain with G-Cter in SUMO2); alternate" evidence="1">
    <location>
        <position position="52"/>
    </location>
</feature>
<feature type="cross-link" description="Glycyl lysine isopeptide (Lys-Gly) (interchain with G-Cter in SUMO2)" evidence="1">
    <location>
        <position position="154"/>
    </location>
</feature>
<feature type="sequence conflict" description="In Ref. 1; BAB29059." evidence="5" ref="1">
    <original>P</original>
    <variation>Q</variation>
    <location>
        <position position="48"/>
    </location>
</feature>
<gene>
    <name type="primary">Rpl11</name>
</gene>
<organism>
    <name type="scientific">Mus musculus</name>
    <name type="common">Mouse</name>
    <dbReference type="NCBI Taxonomy" id="10090"/>
    <lineage>
        <taxon>Eukaryota</taxon>
        <taxon>Metazoa</taxon>
        <taxon>Chordata</taxon>
        <taxon>Craniata</taxon>
        <taxon>Vertebrata</taxon>
        <taxon>Euteleostomi</taxon>
        <taxon>Mammalia</taxon>
        <taxon>Eutheria</taxon>
        <taxon>Euarchontoglires</taxon>
        <taxon>Glires</taxon>
        <taxon>Rodentia</taxon>
        <taxon>Myomorpha</taxon>
        <taxon>Muroidea</taxon>
        <taxon>Muridae</taxon>
        <taxon>Murinae</taxon>
        <taxon>Mus</taxon>
        <taxon>Mus</taxon>
    </lineage>
</organism>
<evidence type="ECO:0000250" key="1">
    <source>
        <dbReference type="UniProtKB" id="P62913"/>
    </source>
</evidence>
<evidence type="ECO:0000269" key="2">
    <source>
    </source>
</evidence>
<evidence type="ECO:0000269" key="3">
    <source>
    </source>
</evidence>
<evidence type="ECO:0000269" key="4">
    <source>
    </source>
</evidence>
<evidence type="ECO:0000305" key="5"/>
<evidence type="ECO:0007744" key="6">
    <source>
        <dbReference type="PDB" id="7CPU"/>
    </source>
</evidence>
<evidence type="ECO:0007744" key="7">
    <source>
        <dbReference type="PDB" id="7CPV"/>
    </source>
</evidence>
<sequence>MAQDQGEKENPMRELRIRKLCLNICVGESGDRLTRAAKVLEQLTGQTPVFSKARYTVRSFGIRRNEKIAVHCTVRGAKAEEILEKGLKVREYELRKNNFSDTGNFGFGIQEHIDLGIKYDPSIGIYGLDFYVVLGRPGFSIADKKRRTGCIGAKHRISKEEAMRWFQQKYDGIILPGK</sequence>
<reference key="1">
    <citation type="journal article" date="2005" name="Science">
        <title>The transcriptional landscape of the mammalian genome.</title>
        <authorList>
            <person name="Carninci P."/>
            <person name="Kasukawa T."/>
            <person name="Katayama S."/>
            <person name="Gough J."/>
            <person name="Frith M.C."/>
            <person name="Maeda N."/>
            <person name="Oyama R."/>
            <person name="Ravasi T."/>
            <person name="Lenhard B."/>
            <person name="Wells C."/>
            <person name="Kodzius R."/>
            <person name="Shimokawa K."/>
            <person name="Bajic V.B."/>
            <person name="Brenner S.E."/>
            <person name="Batalov S."/>
            <person name="Forrest A.R."/>
            <person name="Zavolan M."/>
            <person name="Davis M.J."/>
            <person name="Wilming L.G."/>
            <person name="Aidinis V."/>
            <person name="Allen J.E."/>
            <person name="Ambesi-Impiombato A."/>
            <person name="Apweiler R."/>
            <person name="Aturaliya R.N."/>
            <person name="Bailey T.L."/>
            <person name="Bansal M."/>
            <person name="Baxter L."/>
            <person name="Beisel K.W."/>
            <person name="Bersano T."/>
            <person name="Bono H."/>
            <person name="Chalk A.M."/>
            <person name="Chiu K.P."/>
            <person name="Choudhary V."/>
            <person name="Christoffels A."/>
            <person name="Clutterbuck D.R."/>
            <person name="Crowe M.L."/>
            <person name="Dalla E."/>
            <person name="Dalrymple B.P."/>
            <person name="de Bono B."/>
            <person name="Della Gatta G."/>
            <person name="di Bernardo D."/>
            <person name="Down T."/>
            <person name="Engstrom P."/>
            <person name="Fagiolini M."/>
            <person name="Faulkner G."/>
            <person name="Fletcher C.F."/>
            <person name="Fukushima T."/>
            <person name="Furuno M."/>
            <person name="Futaki S."/>
            <person name="Gariboldi M."/>
            <person name="Georgii-Hemming P."/>
            <person name="Gingeras T.R."/>
            <person name="Gojobori T."/>
            <person name="Green R.E."/>
            <person name="Gustincich S."/>
            <person name="Harbers M."/>
            <person name="Hayashi Y."/>
            <person name="Hensch T.K."/>
            <person name="Hirokawa N."/>
            <person name="Hill D."/>
            <person name="Huminiecki L."/>
            <person name="Iacono M."/>
            <person name="Ikeo K."/>
            <person name="Iwama A."/>
            <person name="Ishikawa T."/>
            <person name="Jakt M."/>
            <person name="Kanapin A."/>
            <person name="Katoh M."/>
            <person name="Kawasawa Y."/>
            <person name="Kelso J."/>
            <person name="Kitamura H."/>
            <person name="Kitano H."/>
            <person name="Kollias G."/>
            <person name="Krishnan S.P."/>
            <person name="Kruger A."/>
            <person name="Kummerfeld S.K."/>
            <person name="Kurochkin I.V."/>
            <person name="Lareau L.F."/>
            <person name="Lazarevic D."/>
            <person name="Lipovich L."/>
            <person name="Liu J."/>
            <person name="Liuni S."/>
            <person name="McWilliam S."/>
            <person name="Madan Babu M."/>
            <person name="Madera M."/>
            <person name="Marchionni L."/>
            <person name="Matsuda H."/>
            <person name="Matsuzawa S."/>
            <person name="Miki H."/>
            <person name="Mignone F."/>
            <person name="Miyake S."/>
            <person name="Morris K."/>
            <person name="Mottagui-Tabar S."/>
            <person name="Mulder N."/>
            <person name="Nakano N."/>
            <person name="Nakauchi H."/>
            <person name="Ng P."/>
            <person name="Nilsson R."/>
            <person name="Nishiguchi S."/>
            <person name="Nishikawa S."/>
            <person name="Nori F."/>
            <person name="Ohara O."/>
            <person name="Okazaki Y."/>
            <person name="Orlando V."/>
            <person name="Pang K.C."/>
            <person name="Pavan W.J."/>
            <person name="Pavesi G."/>
            <person name="Pesole G."/>
            <person name="Petrovsky N."/>
            <person name="Piazza S."/>
            <person name="Reed J."/>
            <person name="Reid J.F."/>
            <person name="Ring B.Z."/>
            <person name="Ringwald M."/>
            <person name="Rost B."/>
            <person name="Ruan Y."/>
            <person name="Salzberg S.L."/>
            <person name="Sandelin A."/>
            <person name="Schneider C."/>
            <person name="Schoenbach C."/>
            <person name="Sekiguchi K."/>
            <person name="Semple C.A."/>
            <person name="Seno S."/>
            <person name="Sessa L."/>
            <person name="Sheng Y."/>
            <person name="Shibata Y."/>
            <person name="Shimada H."/>
            <person name="Shimada K."/>
            <person name="Silva D."/>
            <person name="Sinclair B."/>
            <person name="Sperling S."/>
            <person name="Stupka E."/>
            <person name="Sugiura K."/>
            <person name="Sultana R."/>
            <person name="Takenaka Y."/>
            <person name="Taki K."/>
            <person name="Tammoja K."/>
            <person name="Tan S.L."/>
            <person name="Tang S."/>
            <person name="Taylor M.S."/>
            <person name="Tegner J."/>
            <person name="Teichmann S.A."/>
            <person name="Ueda H.R."/>
            <person name="van Nimwegen E."/>
            <person name="Verardo R."/>
            <person name="Wei C.L."/>
            <person name="Yagi K."/>
            <person name="Yamanishi H."/>
            <person name="Zabarovsky E."/>
            <person name="Zhu S."/>
            <person name="Zimmer A."/>
            <person name="Hide W."/>
            <person name="Bult C."/>
            <person name="Grimmond S.M."/>
            <person name="Teasdale R.D."/>
            <person name="Liu E.T."/>
            <person name="Brusic V."/>
            <person name="Quackenbush J."/>
            <person name="Wahlestedt C."/>
            <person name="Mattick J.S."/>
            <person name="Hume D.A."/>
            <person name="Kai C."/>
            <person name="Sasaki D."/>
            <person name="Tomaru Y."/>
            <person name="Fukuda S."/>
            <person name="Kanamori-Katayama M."/>
            <person name="Suzuki M."/>
            <person name="Aoki J."/>
            <person name="Arakawa T."/>
            <person name="Iida J."/>
            <person name="Imamura K."/>
            <person name="Itoh M."/>
            <person name="Kato T."/>
            <person name="Kawaji H."/>
            <person name="Kawagashira N."/>
            <person name="Kawashima T."/>
            <person name="Kojima M."/>
            <person name="Kondo S."/>
            <person name="Konno H."/>
            <person name="Nakano K."/>
            <person name="Ninomiya N."/>
            <person name="Nishio T."/>
            <person name="Okada M."/>
            <person name="Plessy C."/>
            <person name="Shibata K."/>
            <person name="Shiraki T."/>
            <person name="Suzuki S."/>
            <person name="Tagami M."/>
            <person name="Waki K."/>
            <person name="Watahiki A."/>
            <person name="Okamura-Oho Y."/>
            <person name="Suzuki H."/>
            <person name="Kawai J."/>
            <person name="Hayashizaki Y."/>
        </authorList>
    </citation>
    <scope>NUCLEOTIDE SEQUENCE [LARGE SCALE MRNA]</scope>
    <source>
        <strain>C57BL/6J</strain>
        <strain>NOD</strain>
        <tissue>Bone marrow</tissue>
        <tissue>Brain</tissue>
        <tissue>Embryonic head</tissue>
        <tissue>Eye</tissue>
        <tissue>Small intestine</tissue>
        <tissue>Thymus</tissue>
    </source>
</reference>
<reference key="2">
    <citation type="journal article" date="2004" name="Genome Res.">
        <title>The status, quality, and expansion of the NIH full-length cDNA project: the Mammalian Gene Collection (MGC).</title>
        <authorList>
            <consortium name="The MGC Project Team"/>
        </authorList>
    </citation>
    <scope>NUCLEOTIDE SEQUENCE [LARGE SCALE MRNA]</scope>
    <source>
        <strain>FVB/N</strain>
        <tissue>Colon</tissue>
        <tissue>Mammary tumor</tissue>
    </source>
</reference>
<reference key="3">
    <citation type="journal article" date="2004" name="Nat. Cell Biol.">
        <title>PML regulates p53 stability by sequestering Mdm2 to the nucleolus.</title>
        <authorList>
            <person name="Bernardi R."/>
            <person name="Scaglioni P.P."/>
            <person name="Bergmann S."/>
            <person name="Horn H.F."/>
            <person name="Vousden K.H."/>
            <person name="Pandolfi P.P."/>
        </authorList>
    </citation>
    <scope>FUNCTION</scope>
    <scope>INTERACTION WITH PML AND MDM2</scope>
    <scope>SUBCELLULAR LOCATION</scope>
</reference>
<reference key="4">
    <citation type="journal article" date="2011" name="Nat. Med.">
        <title>Regulation of the MDM2-P53 pathway and tumor growth by PICT1 via nucleolar RPL11.</title>
        <authorList>
            <person name="Sasaki M."/>
            <person name="Kawahara K."/>
            <person name="Nishio M."/>
            <person name="Mimori K."/>
            <person name="Kogo R."/>
            <person name="Hamada K."/>
            <person name="Itoh B."/>
            <person name="Wang J."/>
            <person name="Komatsu Y."/>
            <person name="Yang Y.R."/>
            <person name="Hikasa H."/>
            <person name="Horie Y."/>
            <person name="Yamashita T."/>
            <person name="Kamijo T."/>
            <person name="Zhang Y."/>
            <person name="Zhu Y."/>
            <person name="Prives C."/>
            <person name="Nakano T."/>
            <person name="Mak T.W."/>
            <person name="Sasaki T."/>
            <person name="Maehama T."/>
            <person name="Mori M."/>
            <person name="Suzuki A."/>
        </authorList>
    </citation>
    <scope>FUNCTION</scope>
    <scope>SUBCELLULAR LOCATION</scope>
    <scope>INTERACTION WITH MDM2 AND NOP53</scope>
</reference>
<reference evidence="6 7" key="5">
    <citation type="journal article" date="2022" name="Nature">
        <title>A male germ-cell-specific ribosome controls male fertility.</title>
        <authorList>
            <person name="Li H."/>
            <person name="Huo Y."/>
            <person name="He X."/>
            <person name="Yao L."/>
            <person name="Zhang H."/>
            <person name="Cui Y."/>
            <person name="Xiao H."/>
            <person name="Xie W."/>
            <person name="Zhang D."/>
            <person name="Wang Y."/>
            <person name="Zhang S."/>
            <person name="Tu H."/>
            <person name="Cheng Y."/>
            <person name="Guo Y."/>
            <person name="Cao X."/>
            <person name="Zhu Y."/>
            <person name="Jiang T."/>
            <person name="Guo X."/>
            <person name="Qin Y."/>
            <person name="Sha J."/>
        </authorList>
    </citation>
    <scope>STRUCTURE BY ELECTRON MICROSCOPY (3.03 ANGSTROMS) OF RIBOSOME</scope>
    <scope>FUNCTION</scope>
    <scope>SUBUNIT</scope>
    <scope>SUBCELLULAR LOCATION</scope>
</reference>